<comment type="function">
    <text>Stimulates the secretion of gonadotropins. May be responsible for the regulation of the hypothalamic-pituitary-gonadal axis.</text>
</comment>
<comment type="subcellular location">
    <subcellularLocation>
        <location>Secreted</location>
    </subcellularLocation>
</comment>
<comment type="tissue specificity">
    <text>Synthesized in preoptic neurons and is transported to the pituitary in the preoptic-hypophyseal axons.</text>
</comment>
<comment type="mass spectrometry">
    <molecule>Gonadoliberin-1</molecule>
</comment>
<comment type="similarity">
    <text evidence="3">Belongs to the GnRH family.</text>
</comment>
<name>GON1_HAPBU</name>
<dbReference type="EMBL" id="U31865">
    <property type="protein sequence ID" value="AAC59691.1"/>
    <property type="molecule type" value="mRNA"/>
</dbReference>
<dbReference type="EMBL" id="AF076961">
    <property type="protein sequence ID" value="AAC27716.1"/>
    <property type="molecule type" value="Genomic_DNA"/>
</dbReference>
<dbReference type="PIR" id="I50739">
    <property type="entry name" value="I50739"/>
</dbReference>
<dbReference type="RefSeq" id="NP_001273225.1">
    <property type="nucleotide sequence ID" value="NM_001286296.1"/>
</dbReference>
<dbReference type="STRING" id="8153.ENSHBUP00000029075"/>
<dbReference type="GeneID" id="102291227"/>
<dbReference type="CTD" id="2796"/>
<dbReference type="Proteomes" id="UP000264840">
    <property type="component" value="Whole Genome Shotgun Assembly"/>
</dbReference>
<dbReference type="GO" id="GO:0005576">
    <property type="term" value="C:extracellular region"/>
    <property type="evidence" value="ECO:0000303"/>
    <property type="project" value="UniProtKB"/>
</dbReference>
<dbReference type="GO" id="GO:0005615">
    <property type="term" value="C:extracellular space"/>
    <property type="evidence" value="ECO:0000250"/>
    <property type="project" value="UniProtKB"/>
</dbReference>
<dbReference type="GO" id="GO:0005183">
    <property type="term" value="F:gonadotropin hormone-releasing hormone activity"/>
    <property type="evidence" value="ECO:0000303"/>
    <property type="project" value="UniProtKB"/>
</dbReference>
<dbReference type="GO" id="GO:0031530">
    <property type="term" value="F:gonadotropin-releasing hormone receptor binding"/>
    <property type="evidence" value="ECO:0007669"/>
    <property type="project" value="TreeGrafter"/>
</dbReference>
<dbReference type="InterPro" id="IPR002012">
    <property type="entry name" value="GnRH"/>
</dbReference>
<dbReference type="InterPro" id="IPR019792">
    <property type="entry name" value="Gonadoliberin"/>
</dbReference>
<dbReference type="InterPro" id="IPR004079">
    <property type="entry name" value="Gonadoliberin_I_precursor"/>
</dbReference>
<dbReference type="PANTHER" id="PTHR10522">
    <property type="entry name" value="GONADOLIBERIN"/>
    <property type="match status" value="1"/>
</dbReference>
<dbReference type="PANTHER" id="PTHR10522:SF0">
    <property type="entry name" value="PROGONADOLIBERIN-1"/>
    <property type="match status" value="1"/>
</dbReference>
<dbReference type="Pfam" id="PF00446">
    <property type="entry name" value="GnRH"/>
    <property type="match status" value="1"/>
</dbReference>
<dbReference type="PRINTS" id="PR01541">
    <property type="entry name" value="GONADOLIBRNI"/>
</dbReference>
<dbReference type="PROSITE" id="PS00473">
    <property type="entry name" value="GNRH"/>
    <property type="match status" value="1"/>
</dbReference>
<accession>P51918</accession>
<accession>O93387</accession>
<keyword id="KW-0027">Amidation</keyword>
<keyword id="KW-0165">Cleavage on pair of basic residues</keyword>
<keyword id="KW-0903">Direct protein sequencing</keyword>
<keyword id="KW-0372">Hormone</keyword>
<keyword id="KW-0873">Pyrrolidone carboxylic acid</keyword>
<keyword id="KW-1185">Reference proteome</keyword>
<keyword id="KW-0964">Secreted</keyword>
<keyword id="KW-0732">Signal</keyword>
<evidence type="ECO:0000255" key="1"/>
<evidence type="ECO:0000269" key="2">
    <source>
    </source>
</evidence>
<evidence type="ECO:0000305" key="3"/>
<reference key="1">
    <citation type="journal article" date="1995" name="Proc. Natl. Acad. Sci. U.S.A.">
        <title>Three gonadotropin-releasing hormone genes in one organism suggest novel roles for an ancient peptide.</title>
        <authorList>
            <person name="White S.A."/>
            <person name="Kasten T.L."/>
            <person name="Bond C.T."/>
            <person name="Adelman J.P."/>
            <person name="Fernald R.D."/>
        </authorList>
    </citation>
    <scope>NUCLEOTIDE SEQUENCE [MRNA]</scope>
</reference>
<reference key="2">
    <citation type="journal article" date="1998" name="Gen. Comp. Endocrinol.">
        <title>Ontogeny of gonadotropin-releasing hormone (GnRH) gene expression reveals a distinct origin for GnRH-containing neurons in the midbrain.</title>
        <authorList>
            <person name="White R.B."/>
            <person name="Fernald R.D."/>
        </authorList>
    </citation>
    <scope>NUCLEOTIDE SEQUENCE</scope>
</reference>
<reference key="3">
    <citation type="journal article" date="1995" name="Regul. Pept.">
        <title>Primary structure of solitary form of gonadotropin-releasing hormone (GnRH) in cichlid pituitary; three forms of GnRH in brain of cichlid and pumpkinseed fish.</title>
        <authorList>
            <person name="Powell J.F.F."/>
            <person name="Fischer W.H."/>
            <person name="Park M."/>
            <person name="Craig A.G."/>
            <person name="Rivier J.E."/>
            <person name="White S.A."/>
            <person name="Francis R.C."/>
            <person name="Fernald R.D."/>
            <person name="Licht P."/>
            <person name="Warby C."/>
            <person name="Sherwood N.M."/>
        </authorList>
    </citation>
    <scope>PROTEIN SEQUENCE OF 23-32</scope>
    <scope>PYROGLUTAMATE FORMATION AT GLN-23</scope>
    <scope>AMIDATION AT GLY-32</scope>
    <scope>MASS SPECTROMETRY</scope>
    <source>
        <tissue>Pituitary</tissue>
    </source>
</reference>
<organism>
    <name type="scientific">Haplochromis burtoni</name>
    <name type="common">Burton's mouthbrooder</name>
    <name type="synonym">Chromis burtoni</name>
    <dbReference type="NCBI Taxonomy" id="8153"/>
    <lineage>
        <taxon>Eukaryota</taxon>
        <taxon>Metazoa</taxon>
        <taxon>Chordata</taxon>
        <taxon>Craniata</taxon>
        <taxon>Vertebrata</taxon>
        <taxon>Euteleostomi</taxon>
        <taxon>Actinopterygii</taxon>
        <taxon>Neopterygii</taxon>
        <taxon>Teleostei</taxon>
        <taxon>Neoteleostei</taxon>
        <taxon>Acanthomorphata</taxon>
        <taxon>Ovalentaria</taxon>
        <taxon>Cichlomorphae</taxon>
        <taxon>Cichliformes</taxon>
        <taxon>Cichlidae</taxon>
        <taxon>African cichlids</taxon>
        <taxon>Pseudocrenilabrinae</taxon>
        <taxon>Haplochromini</taxon>
        <taxon>Haplochromis</taxon>
    </lineage>
</organism>
<gene>
    <name type="primary">gnrh1</name>
</gene>
<sequence>MAAKILALWLLLAGTVFPQGCCQHWSYGLSPGGKRDLDNFSDTLGNMVEEFPRVEAPCSVFGCAEESPFAKMYRVKGLLASVAERENGHRTFKK</sequence>
<proteinExistence type="evidence at protein level"/>
<protein>
    <recommendedName>
        <fullName>Progonadoliberin-1</fullName>
    </recommendedName>
    <alternativeName>
        <fullName>Progonadoliberin I</fullName>
    </alternativeName>
    <component>
        <recommendedName>
            <fullName>Gonadoliberin-1</fullName>
        </recommendedName>
        <alternativeName>
            <fullName>Gonadoliberin I</fullName>
        </alternativeName>
        <alternativeName>
            <fullName>Gonadotropin-releasing hormone I</fullName>
            <shortName>GnRH-I</shortName>
        </alternativeName>
        <alternativeName>
            <fullName>Luliberin I</fullName>
        </alternativeName>
        <alternativeName>
            <fullName>Luteinizing hormone-releasing hormone I</fullName>
            <shortName>LH-RH I</shortName>
        </alternativeName>
    </component>
    <component>
        <recommendedName>
            <fullName>GnRH-associated peptide 1</fullName>
        </recommendedName>
        <alternativeName>
            <fullName>GnRH-associated peptide I</fullName>
        </alternativeName>
    </component>
</protein>
<feature type="signal peptide" evidence="2">
    <location>
        <begin position="1"/>
        <end position="22"/>
    </location>
</feature>
<feature type="chain" id="PRO_0000012432" description="Progonadoliberin-1">
    <location>
        <begin position="23"/>
        <end position="94"/>
    </location>
</feature>
<feature type="peptide" id="PRO_0000012433" description="Gonadoliberin-1">
    <location>
        <begin position="23"/>
        <end position="32"/>
    </location>
</feature>
<feature type="peptide" id="PRO_0000012434" description="GnRH-associated peptide 1" evidence="1">
    <location>
        <begin position="36"/>
        <end position="94"/>
    </location>
</feature>
<feature type="modified residue" description="Pyrrolidone carboxylic acid" evidence="2">
    <location>
        <position position="23"/>
    </location>
</feature>
<feature type="modified residue" description="Glycine amide" evidence="2">
    <location>
        <position position="32"/>
    </location>
</feature>
<feature type="sequence conflict" description="In Ref. 1; AAC59691." evidence="3" ref="1">
    <original>ENGHRTFKK</original>
    <variation>KMDTGHSRNERFL</variation>
    <location>
        <begin position="86"/>
        <end position="94"/>
    </location>
</feature>